<keyword id="KW-0687">Ribonucleoprotein</keyword>
<keyword id="KW-0689">Ribosomal protein</keyword>
<keyword id="KW-0694">RNA-binding</keyword>
<keyword id="KW-0699">rRNA-binding</keyword>
<dbReference type="EMBL" id="CP000875">
    <property type="protein sequence ID" value="ABX07594.1"/>
    <property type="molecule type" value="Genomic_DNA"/>
</dbReference>
<dbReference type="SMR" id="A9B461"/>
<dbReference type="FunCoup" id="A9B461">
    <property type="interactions" value="437"/>
</dbReference>
<dbReference type="STRING" id="316274.Haur_4964"/>
<dbReference type="KEGG" id="hau:Haur_4964"/>
<dbReference type="eggNOG" id="COG0238">
    <property type="taxonomic scope" value="Bacteria"/>
</dbReference>
<dbReference type="HOGENOM" id="CLU_148710_2_2_0"/>
<dbReference type="InParanoid" id="A9B461"/>
<dbReference type="Proteomes" id="UP000000787">
    <property type="component" value="Chromosome"/>
</dbReference>
<dbReference type="GO" id="GO:0022627">
    <property type="term" value="C:cytosolic small ribosomal subunit"/>
    <property type="evidence" value="ECO:0007669"/>
    <property type="project" value="TreeGrafter"/>
</dbReference>
<dbReference type="GO" id="GO:0070181">
    <property type="term" value="F:small ribosomal subunit rRNA binding"/>
    <property type="evidence" value="ECO:0007669"/>
    <property type="project" value="TreeGrafter"/>
</dbReference>
<dbReference type="GO" id="GO:0003735">
    <property type="term" value="F:structural constituent of ribosome"/>
    <property type="evidence" value="ECO:0007669"/>
    <property type="project" value="InterPro"/>
</dbReference>
<dbReference type="GO" id="GO:0006412">
    <property type="term" value="P:translation"/>
    <property type="evidence" value="ECO:0007669"/>
    <property type="project" value="UniProtKB-UniRule"/>
</dbReference>
<dbReference type="Gene3D" id="4.10.640.10">
    <property type="entry name" value="Ribosomal protein S18"/>
    <property type="match status" value="1"/>
</dbReference>
<dbReference type="HAMAP" id="MF_00270">
    <property type="entry name" value="Ribosomal_bS18"/>
    <property type="match status" value="1"/>
</dbReference>
<dbReference type="InterPro" id="IPR001648">
    <property type="entry name" value="Ribosomal_bS18"/>
</dbReference>
<dbReference type="InterPro" id="IPR036870">
    <property type="entry name" value="Ribosomal_bS18_sf"/>
</dbReference>
<dbReference type="NCBIfam" id="TIGR00165">
    <property type="entry name" value="S18"/>
    <property type="match status" value="1"/>
</dbReference>
<dbReference type="PANTHER" id="PTHR13479">
    <property type="entry name" value="30S RIBOSOMAL PROTEIN S18"/>
    <property type="match status" value="1"/>
</dbReference>
<dbReference type="PANTHER" id="PTHR13479:SF40">
    <property type="entry name" value="SMALL RIBOSOMAL SUBUNIT PROTEIN BS18M"/>
    <property type="match status" value="1"/>
</dbReference>
<dbReference type="Pfam" id="PF01084">
    <property type="entry name" value="Ribosomal_S18"/>
    <property type="match status" value="1"/>
</dbReference>
<dbReference type="PRINTS" id="PR00974">
    <property type="entry name" value="RIBOSOMALS18"/>
</dbReference>
<dbReference type="SUPFAM" id="SSF46911">
    <property type="entry name" value="Ribosomal protein S18"/>
    <property type="match status" value="1"/>
</dbReference>
<accession>A9B461</accession>
<evidence type="ECO:0000255" key="1">
    <source>
        <dbReference type="HAMAP-Rule" id="MF_00270"/>
    </source>
</evidence>
<evidence type="ECO:0000305" key="2"/>
<organism>
    <name type="scientific">Herpetosiphon aurantiacus (strain ATCC 23779 / DSM 785 / 114-95)</name>
    <dbReference type="NCBI Taxonomy" id="316274"/>
    <lineage>
        <taxon>Bacteria</taxon>
        <taxon>Bacillati</taxon>
        <taxon>Chloroflexota</taxon>
        <taxon>Chloroflexia</taxon>
        <taxon>Herpetosiphonales</taxon>
        <taxon>Herpetosiphonaceae</taxon>
        <taxon>Herpetosiphon</taxon>
    </lineage>
</organism>
<proteinExistence type="inferred from homology"/>
<comment type="function">
    <text evidence="1">Binds as a heterodimer with protein bS6 to the central domain of the 16S rRNA, where it helps stabilize the platform of the 30S subunit.</text>
</comment>
<comment type="subunit">
    <text evidence="1">Part of the 30S ribosomal subunit. Forms a tight heterodimer with protein bS6.</text>
</comment>
<comment type="similarity">
    <text evidence="1">Belongs to the bacterial ribosomal protein bS18 family.</text>
</comment>
<name>RS18_HERA2</name>
<feature type="chain" id="PRO_0000345485" description="Small ribosomal subunit protein bS18">
    <location>
        <begin position="1"/>
        <end position="86"/>
    </location>
</feature>
<gene>
    <name evidence="1" type="primary">rpsR</name>
    <name type="ordered locus">Haur_4964</name>
</gene>
<protein>
    <recommendedName>
        <fullName evidence="1">Small ribosomal subunit protein bS18</fullName>
    </recommendedName>
    <alternativeName>
        <fullName evidence="2">30S ribosomal protein S18</fullName>
    </alternativeName>
</protein>
<reference key="1">
    <citation type="journal article" date="2011" name="Stand. Genomic Sci.">
        <title>Complete genome sequence of the filamentous gliding predatory bacterium Herpetosiphon aurantiacus type strain (114-95(T)).</title>
        <authorList>
            <person name="Kiss H."/>
            <person name="Nett M."/>
            <person name="Domin N."/>
            <person name="Martin K."/>
            <person name="Maresca J.A."/>
            <person name="Copeland A."/>
            <person name="Lapidus A."/>
            <person name="Lucas S."/>
            <person name="Berry K.W."/>
            <person name="Glavina Del Rio T."/>
            <person name="Dalin E."/>
            <person name="Tice H."/>
            <person name="Pitluck S."/>
            <person name="Richardson P."/>
            <person name="Bruce D."/>
            <person name="Goodwin L."/>
            <person name="Han C."/>
            <person name="Detter J.C."/>
            <person name="Schmutz J."/>
            <person name="Brettin T."/>
            <person name="Land M."/>
            <person name="Hauser L."/>
            <person name="Kyrpides N.C."/>
            <person name="Ivanova N."/>
            <person name="Goeker M."/>
            <person name="Woyke T."/>
            <person name="Klenk H.P."/>
            <person name="Bryant D.A."/>
        </authorList>
    </citation>
    <scope>NUCLEOTIDE SEQUENCE [LARGE SCALE GENOMIC DNA]</scope>
    <source>
        <strain>ATCC 23779 / DSM 785 / 114-95</strain>
    </source>
</reference>
<sequence length="86" mass="10072">MSDQRRKSAGRRKYTPRRKVCVFTAEGIVPDYKDIKRLQRMVSDRGKILPRRRTGTCAKYQRKLNVAIKRARHLALLPFVSENTRG</sequence>